<accession>A0A0K2JL82</accession>
<accession>A0A0S3TVT0</accession>
<name>CRED_STRCM</name>
<keyword id="KW-0002">3D-structure</keyword>
<keyword id="KW-0045">Antibiotic biosynthesis</keyword>
<keyword id="KW-0456">Lyase</keyword>
<reference key="1">
    <citation type="journal article" date="2015" name="ChemBioChem">
        <title>The cremeomycin biosynthetic gene cluster encodes a pathway for diazo formation.</title>
        <authorList>
            <person name="Waldman A.J."/>
            <person name="Pechersky Y."/>
            <person name="Wang P."/>
            <person name="Wang J.X."/>
            <person name="Balskus E.P."/>
        </authorList>
    </citation>
    <scope>NUCLEOTIDE SEQUENCE [GENOMIC DNA]</scope>
    <scope>FUNCTION</scope>
    <source>
        <strain>ATCC 19744 / DSM 40147 / JCM 4362 / NBRC 12760 / NRRL 3241 / INA 815/54</strain>
    </source>
</reference>
<reference key="2">
    <citation type="journal article" date="2016" name="Nat. Chem. Biol.">
        <title>A nitrous acid biosynthetic pathway for diazo group formation in bacteria.</title>
        <authorList>
            <person name="Sugai Y."/>
            <person name="Katsuyama Y."/>
            <person name="Ohnishi Y."/>
        </authorList>
    </citation>
    <scope>NUCLEOTIDE SEQUENCE [GENOMIC DNA]</scope>
    <scope>FUNCTION</scope>
    <scope>CATALYTIC ACTIVITY</scope>
    <source>
        <strain>ATCC 19744 / DSM 40147 / JCM 4362 / NBRC 12760 / NRRL 3241 / INA 815/54</strain>
    </source>
</reference>
<reference evidence="9 10" key="3">
    <citation type="journal article" date="2018" name="FEBS J.">
        <title>Crystal structure of the nitrosuccinate lyase CreD in complex with fumarate provides insights into the catalytic mechanism for nitrous acid elimination.</title>
        <authorList>
            <person name="Katsuyama Y."/>
            <person name="Sato Y."/>
            <person name="Sugai Y."/>
            <person name="Higashiyama Y."/>
            <person name="Senda M."/>
            <person name="Senda T."/>
            <person name="Ohnishi Y."/>
        </authorList>
    </citation>
    <scope>X-RAY CRYSTALLOGRAPHY (2.18 ANGSTROMS) OF APOENZYME AND IN COMPLEX WITH FUMARATE</scope>
    <scope>FUNCTION</scope>
    <scope>CATALYTIC ACTIVITY</scope>
    <scope>REACTION MECHANISM</scope>
    <scope>SUBUNIT</scope>
    <scope>ACTIVE SITE</scope>
    <scope>MUTAGENESIS OF ASN-93; ASP-125; HIS-253; SER-302; LYS-308; ASN-310 AND ARG-341</scope>
</reference>
<comment type="function">
    <text evidence="1 2 3">Part of a gene cluster involved in the biosynthesis of cremeomycin, a light-sensitive o-diazoquinone with antibacterial and antiproliferative effects (PubMed:26278892, PubMed:26689788). Catalyzes the formation of nitrous acid from nitrosuccinic acid (2-nitrobutanedioate) by elimination of its nitro group (PubMed:26689788, PubMed:29505698).</text>
</comment>
<comment type="catalytic activity">
    <reaction evidence="2 3">
        <text>2-nitrobutanedioate = fumarate + nitrite + H(+)</text>
        <dbReference type="Rhea" id="RHEA:69044"/>
        <dbReference type="ChEBI" id="CHEBI:15378"/>
        <dbReference type="ChEBI" id="CHEBI:16301"/>
        <dbReference type="ChEBI" id="CHEBI:29806"/>
        <dbReference type="ChEBI" id="CHEBI:180682"/>
        <dbReference type="EC" id="4.3.99.5"/>
    </reaction>
    <physiologicalReaction direction="left-to-right" evidence="2">
        <dbReference type="Rhea" id="RHEA:69045"/>
    </physiologicalReaction>
</comment>
<comment type="pathway">
    <text evidence="6 7">Antibiotic biosynthesis.</text>
</comment>
<comment type="subunit">
    <text evidence="3">Homotetramer.</text>
</comment>
<comment type="similarity">
    <text evidence="5">Belongs to the class-II fumarase/aspartase family.</text>
</comment>
<comment type="sequence caution" evidence="5">
    <conflict type="erroneous initiation">
        <sequence resource="EMBL-CDS" id="BAU09301"/>
    </conflict>
    <text>Truncated N-terminus.</text>
</comment>
<evidence type="ECO:0000269" key="1">
    <source>
    </source>
</evidence>
<evidence type="ECO:0000269" key="2">
    <source>
    </source>
</evidence>
<evidence type="ECO:0000269" key="3">
    <source>
    </source>
</evidence>
<evidence type="ECO:0000303" key="4">
    <source>
    </source>
</evidence>
<evidence type="ECO:0000305" key="5"/>
<evidence type="ECO:0000305" key="6">
    <source>
    </source>
</evidence>
<evidence type="ECO:0000305" key="7">
    <source>
    </source>
</evidence>
<evidence type="ECO:0000305" key="8">
    <source>
    </source>
</evidence>
<evidence type="ECO:0007744" key="9">
    <source>
        <dbReference type="PDB" id="5XNY"/>
    </source>
</evidence>
<evidence type="ECO:0007744" key="10">
    <source>
        <dbReference type="PDB" id="5XNZ"/>
    </source>
</evidence>
<evidence type="ECO:0007829" key="11">
    <source>
        <dbReference type="PDB" id="5XNY"/>
    </source>
</evidence>
<sequence length="476" mass="49261">MTRPPAPPPGAPGADELLDCGLLSPVRAGTPVEALVCDSAWLQAMLDAEAALTRAQARTGFLPAAAAEAITAAARADRIDLLAVARGARETANPVVGLVAALTAAVRRDDPAAAEYVHRGSTSQDVLDTGAMLVARRALRLIGDDLDRAADALAALAADHRDTPMAGRTLALHAVPTTFGLKAAGWLELVSEAAGRVARLRDGLPFSLGGAAGTLAGYFGDRTDRGDPAVLLDRLLDAYAAETGLARPVLPWHVLRTPVADLAAVLAFTAGALGKIAVDVQSLARTEVAEVAEPAVEGRGASSAMPHKRNPVLSTLIRSAALQVPALATGLTQCLVSEDERSAGAWHAEWQPLRECLRLTGGAARTAVELAAGLEVDAARMRANLDLTDGRIVSESVAVALTPLLGRQAAKELLTRAAFTAGHEGRTLGEVLGELPELDGVLPKERWEALLDPARATGVAGALVDGALARRRPPAR</sequence>
<organism>
    <name type="scientific">Streptomyces cremeus</name>
    <dbReference type="NCBI Taxonomy" id="66881"/>
    <lineage>
        <taxon>Bacteria</taxon>
        <taxon>Bacillati</taxon>
        <taxon>Actinomycetota</taxon>
        <taxon>Actinomycetes</taxon>
        <taxon>Kitasatosporales</taxon>
        <taxon>Streptomycetaceae</taxon>
        <taxon>Streptomyces</taxon>
    </lineage>
</organism>
<feature type="chain" id="PRO_0000457471" description="Nitrosuccinate lyase">
    <location>
        <begin position="1"/>
        <end position="476"/>
    </location>
</feature>
<feature type="active site" description="Proton acceptor" evidence="8">
    <location>
        <position position="302"/>
    </location>
</feature>
<feature type="active site" description="Proton donor" evidence="8">
    <location>
        <position position="341"/>
    </location>
</feature>
<feature type="binding site" evidence="3 10">
    <location>
        <position position="137"/>
    </location>
    <ligand>
        <name>fumarate</name>
        <dbReference type="ChEBI" id="CHEBI:29806"/>
        <label>1</label>
    </ligand>
</feature>
<feature type="binding site" evidence="3 10">
    <location>
        <position position="140"/>
    </location>
    <ligand>
        <name>fumarate</name>
        <dbReference type="ChEBI" id="CHEBI:29806"/>
        <label>1</label>
    </ligand>
</feature>
<feature type="binding site" evidence="3 10">
    <location>
        <position position="201"/>
    </location>
    <ligand>
        <name>fumarate</name>
        <dbReference type="ChEBI" id="CHEBI:29806"/>
        <label>1</label>
    </ligand>
</feature>
<feature type="binding site" evidence="3 10">
    <location>
        <position position="308"/>
    </location>
    <ligand>
        <name>fumarate</name>
        <dbReference type="ChEBI" id="CHEBI:29806"/>
        <label>2</label>
    </ligand>
</feature>
<feature type="binding site" evidence="3 10">
    <location>
        <position position="310"/>
    </location>
    <ligand>
        <name>fumarate</name>
        <dbReference type="ChEBI" id="CHEBI:29806"/>
        <label>2</label>
    </ligand>
</feature>
<feature type="mutagenesis site" description="Slight decrease in activity." evidence="3">
    <original>N</original>
    <variation>A</variation>
    <location>
        <position position="93"/>
    </location>
</feature>
<feature type="mutagenesis site" description="Almost loss of activity." evidence="3">
    <original>D</original>
    <variation>N</variation>
    <variation>V</variation>
    <location>
        <position position="125"/>
    </location>
</feature>
<feature type="mutagenesis site" description="Loss of activity." evidence="3">
    <original>H</original>
    <variation>A</variation>
    <location>
        <position position="253"/>
    </location>
</feature>
<feature type="mutagenesis site" description="Loss of activity." evidence="3">
    <original>S</original>
    <variation>A</variation>
    <location>
        <position position="302"/>
    </location>
</feature>
<feature type="mutagenesis site" description="Loss of activity." evidence="3">
    <original>K</original>
    <variation>A</variation>
    <location>
        <position position="308"/>
    </location>
</feature>
<feature type="mutagenesis site" description="Loss of activity." evidence="3">
    <original>N</original>
    <variation>A</variation>
    <location>
        <position position="310"/>
    </location>
</feature>
<feature type="mutagenesis site" description="Loss of activity." evidence="3">
    <original>R</original>
    <variation>A</variation>
    <location>
        <position position="341"/>
    </location>
</feature>
<feature type="turn" evidence="11">
    <location>
        <begin position="25"/>
        <end position="29"/>
    </location>
</feature>
<feature type="helix" evidence="11">
    <location>
        <begin position="32"/>
        <end position="36"/>
    </location>
</feature>
<feature type="helix" evidence="11">
    <location>
        <begin position="38"/>
        <end position="58"/>
    </location>
</feature>
<feature type="helix" evidence="11">
    <location>
        <begin position="64"/>
        <end position="73"/>
    </location>
</feature>
<feature type="helix" evidence="11">
    <location>
        <begin position="76"/>
        <end position="78"/>
    </location>
</feature>
<feature type="helix" evidence="11">
    <location>
        <begin position="81"/>
        <end position="87"/>
    </location>
</feature>
<feature type="turn" evidence="11">
    <location>
        <begin position="88"/>
        <end position="92"/>
    </location>
</feature>
<feature type="helix" evidence="11">
    <location>
        <begin position="95"/>
        <end position="109"/>
    </location>
</feature>
<feature type="helix" evidence="11">
    <location>
        <begin position="113"/>
        <end position="116"/>
    </location>
</feature>
<feature type="turn" evidence="11">
    <location>
        <begin position="117"/>
        <end position="120"/>
    </location>
</feature>
<feature type="helix" evidence="11">
    <location>
        <begin position="123"/>
        <end position="159"/>
    </location>
</feature>
<feature type="turn" evidence="11">
    <location>
        <begin position="160"/>
        <end position="162"/>
    </location>
</feature>
<feature type="strand" evidence="11">
    <location>
        <begin position="164"/>
        <end position="169"/>
    </location>
</feature>
<feature type="strand" evidence="11">
    <location>
        <begin position="172"/>
        <end position="178"/>
    </location>
</feature>
<feature type="helix" evidence="11">
    <location>
        <begin position="179"/>
        <end position="203"/>
    </location>
</feature>
<feature type="turn" evidence="11">
    <location>
        <begin position="216"/>
        <end position="218"/>
    </location>
</feature>
<feature type="helix" evidence="11">
    <location>
        <begin position="228"/>
        <end position="243"/>
    </location>
</feature>
<feature type="helix" evidence="11">
    <location>
        <begin position="257"/>
        <end position="284"/>
    </location>
</feature>
<feature type="turn" evidence="11">
    <location>
        <begin position="286"/>
        <end position="288"/>
    </location>
</feature>
<feature type="strand" evidence="11">
    <location>
        <begin position="290"/>
        <end position="292"/>
    </location>
</feature>
<feature type="helix" evidence="11">
    <location>
        <begin position="312"/>
        <end position="321"/>
    </location>
</feature>
<feature type="helix" evidence="11">
    <location>
        <begin position="324"/>
        <end position="333"/>
    </location>
</feature>
<feature type="turn" evidence="11">
    <location>
        <begin position="345"/>
        <end position="348"/>
    </location>
</feature>
<feature type="helix" evidence="11">
    <location>
        <begin position="350"/>
        <end position="373"/>
    </location>
</feature>
<feature type="helix" evidence="11">
    <location>
        <begin position="378"/>
        <end position="385"/>
    </location>
</feature>
<feature type="helix" evidence="11">
    <location>
        <begin position="386"/>
        <end position="388"/>
    </location>
</feature>
<feature type="helix" evidence="11">
    <location>
        <begin position="391"/>
        <end position="393"/>
    </location>
</feature>
<feature type="helix" evidence="11">
    <location>
        <begin position="394"/>
        <end position="405"/>
    </location>
</feature>
<feature type="helix" evidence="11">
    <location>
        <begin position="407"/>
        <end position="424"/>
    </location>
</feature>
<feature type="helix" evidence="11">
    <location>
        <begin position="428"/>
        <end position="432"/>
    </location>
</feature>
<feature type="helix" evidence="11">
    <location>
        <begin position="436"/>
        <end position="438"/>
    </location>
</feature>
<feature type="helix" evidence="11">
    <location>
        <begin position="444"/>
        <end position="450"/>
    </location>
</feature>
<feature type="helix" evidence="11">
    <location>
        <begin position="453"/>
        <end position="455"/>
    </location>
</feature>
<feature type="helix" evidence="11">
    <location>
        <begin position="460"/>
        <end position="469"/>
    </location>
</feature>
<proteinExistence type="evidence at protein level"/>
<protein>
    <recommendedName>
        <fullName evidence="5">Nitrosuccinate lyase</fullName>
        <ecNumber evidence="2">4.3.99.5</ecNumber>
    </recommendedName>
</protein>
<dbReference type="EC" id="4.3.99.5" evidence="2"/>
<dbReference type="EMBL" id="KT381192">
    <property type="protein sequence ID" value="ALA99201.1"/>
    <property type="molecule type" value="Genomic_DNA"/>
</dbReference>
<dbReference type="EMBL" id="LC033425">
    <property type="protein sequence ID" value="BAU09301.1"/>
    <property type="status" value="ALT_INIT"/>
    <property type="molecule type" value="Genomic_DNA"/>
</dbReference>
<dbReference type="RefSeq" id="WP_345228837.1">
    <property type="nucleotide sequence ID" value="NZ_BAAAXE010000015.1"/>
</dbReference>
<dbReference type="PDB" id="5XNY">
    <property type="method" value="X-ray"/>
    <property type="resolution" value="2.18 A"/>
    <property type="chains" value="A=1-476"/>
</dbReference>
<dbReference type="PDB" id="5XNZ">
    <property type="method" value="X-ray"/>
    <property type="resolution" value="2.30 A"/>
    <property type="chains" value="A=1-476"/>
</dbReference>
<dbReference type="PDBsum" id="5XNY"/>
<dbReference type="PDBsum" id="5XNZ"/>
<dbReference type="SMR" id="A0A0K2JL82"/>
<dbReference type="KEGG" id="ag:ALA99201"/>
<dbReference type="KEGG" id="ag:BAU09301"/>
<dbReference type="BioCyc" id="MetaCyc:MONOMER-21757"/>
<dbReference type="GO" id="GO:0016829">
    <property type="term" value="F:lyase activity"/>
    <property type="evidence" value="ECO:0007669"/>
    <property type="project" value="UniProtKB-KW"/>
</dbReference>
<dbReference type="GO" id="GO:0019619">
    <property type="term" value="P:3,4-dihydroxybenzoate catabolic process"/>
    <property type="evidence" value="ECO:0007669"/>
    <property type="project" value="InterPro"/>
</dbReference>
<dbReference type="GO" id="GO:0017000">
    <property type="term" value="P:antibiotic biosynthetic process"/>
    <property type="evidence" value="ECO:0007669"/>
    <property type="project" value="UniProtKB-KW"/>
</dbReference>
<dbReference type="CDD" id="cd01597">
    <property type="entry name" value="pCLME"/>
    <property type="match status" value="1"/>
</dbReference>
<dbReference type="Gene3D" id="1.10.40.30">
    <property type="entry name" value="Fumarase/aspartase (C-terminal domain)"/>
    <property type="match status" value="1"/>
</dbReference>
<dbReference type="Gene3D" id="1.20.200.10">
    <property type="entry name" value="Fumarase/aspartase (Central domain)"/>
    <property type="match status" value="1"/>
</dbReference>
<dbReference type="Gene3D" id="1.10.275.10">
    <property type="entry name" value="Fumarase/aspartase (N-terminal domain)"/>
    <property type="match status" value="1"/>
</dbReference>
<dbReference type="InterPro" id="IPR019468">
    <property type="entry name" value="AdenyloSucc_lyase_C"/>
</dbReference>
<dbReference type="InterPro" id="IPR024083">
    <property type="entry name" value="Fumarase/histidase_N"/>
</dbReference>
<dbReference type="InterPro" id="IPR000362">
    <property type="entry name" value="Fumarate_lyase_fam"/>
</dbReference>
<dbReference type="InterPro" id="IPR022761">
    <property type="entry name" value="Fumarate_lyase_N"/>
</dbReference>
<dbReference type="InterPro" id="IPR008948">
    <property type="entry name" value="L-Aspartase-like"/>
</dbReference>
<dbReference type="InterPro" id="IPR012789">
    <property type="entry name" value="Protocat_PcaB-like"/>
</dbReference>
<dbReference type="NCBIfam" id="TIGR02426">
    <property type="entry name" value="protocat_pcaB"/>
    <property type="match status" value="1"/>
</dbReference>
<dbReference type="PANTHER" id="PTHR43172">
    <property type="entry name" value="ADENYLOSUCCINATE LYASE"/>
    <property type="match status" value="1"/>
</dbReference>
<dbReference type="PANTHER" id="PTHR43172:SF2">
    <property type="entry name" value="ADENYLOSUCCINATE LYASE C-TERMINAL DOMAIN-CONTAINING PROTEIN"/>
    <property type="match status" value="1"/>
</dbReference>
<dbReference type="Pfam" id="PF10397">
    <property type="entry name" value="ADSL_C"/>
    <property type="match status" value="1"/>
</dbReference>
<dbReference type="Pfam" id="PF00206">
    <property type="entry name" value="Lyase_1"/>
    <property type="match status" value="1"/>
</dbReference>
<dbReference type="PRINTS" id="PR00149">
    <property type="entry name" value="FUMRATELYASE"/>
</dbReference>
<dbReference type="SMART" id="SM00998">
    <property type="entry name" value="ADSL_C"/>
    <property type="match status" value="1"/>
</dbReference>
<dbReference type="SUPFAM" id="SSF48557">
    <property type="entry name" value="L-aspartase-like"/>
    <property type="match status" value="1"/>
</dbReference>
<gene>
    <name evidence="4" type="primary">creD</name>
</gene>